<proteinExistence type="inferred from homology"/>
<reference key="1">
    <citation type="journal article" date="2004" name="Nature">
        <title>Genesis of a highly pathogenic and potentially pandemic H5N1 influenza virus in eastern Asia.</title>
        <authorList>
            <person name="Li K.S."/>
            <person name="Guan Y."/>
            <person name="Wang J."/>
            <person name="Smith G.J.D."/>
            <person name="Xu K.M."/>
            <person name="Duan L."/>
            <person name="Rahardjo A.P."/>
            <person name="Puthavathana P."/>
            <person name="Buranathai C."/>
            <person name="Nguyen T.D."/>
            <person name="Estoepangestie A.T.S."/>
            <person name="Chaisingh A."/>
            <person name="Auewarakul P."/>
            <person name="Long H.T."/>
            <person name="Hanh N.T.H."/>
            <person name="Webby R.J."/>
            <person name="Poon L.L.M."/>
            <person name="Chen H."/>
            <person name="Shortridge K.F."/>
            <person name="Yuen K.Y."/>
            <person name="Webster R.G."/>
            <person name="Peiris J.S.M."/>
        </authorList>
    </citation>
    <scope>NUCLEOTIDE SEQUENCE [GENOMIC RNA]</scope>
</reference>
<reference key="2">
    <citation type="submission" date="2008-03" db="EMBL/GenBank/DDBJ databases">
        <authorList>
            <person name="Li K.S."/>
            <person name="Guan Y."/>
            <person name="Wang J."/>
            <person name="Smith G.J.D."/>
            <person name="Xu K.M."/>
            <person name="Duan L."/>
            <person name="Rahardjo A.P."/>
            <person name="Puthavathana P."/>
            <person name="Buranathai C."/>
            <person name="Nguyen T.D."/>
            <person name="Estoepangestie A.T.S."/>
            <person name="Chaisingh A."/>
            <person name="Auewarakul P."/>
            <person name="Long H.T."/>
            <person name="Hanh N.T.H."/>
            <person name="Lim W."/>
            <person name="Webby R.J."/>
            <person name="Poon L.L.M."/>
            <person name="Chen H."/>
            <person name="Shortridge K.F."/>
            <person name="Yuen K.Y."/>
            <person name="Webster R.G."/>
            <person name="Peiris J.S.M."/>
        </authorList>
    </citation>
    <scope>SEQUENCE REVISION</scope>
</reference>
<sequence>CFNPMTVELAEKAMKEYGEDPKIETNKFAAICTHLEVCFMYSDFHFIDERGESMIVESGDPNALLKHRFEIIEGRDRTMAWTVVNSICNTTGVDKPKFLPDLYDYKENRFIEIGVTRREVHIYYLEKANKIKSEKTHIHIFSFTGEEMATKADYTLDEESRARIKTRLFTIRQEMASRGLWDSFRQSERGEETIEERFEITGTMRRLADQSLPPNFSSLENFRAYVDGFKPNGCIEGKLSQMSKEVNARIEPFQKTTPRPLRLPDGPPCSQRSKFLLMDALKLSIEDPSHEGEGIPLYDAIKCMKTFFGWKEPNVAKPHEKGINPNYLLAWKQVLAELQDIENEEKIPKTKNMKKTSQLKWALGENMAPEKVDFEDCKDVSDLRQYDSDEPESRSLASWIQSEFNKACELTDSSWIELDEIGEDVAPIEHIASMRRNYFTAEVSHCRATEYIMKGVYINTALLNASCAAMDDFQLIPMISKCRTKEGRRKTNLYGFIIKGRSHLRNDTDVVNFVSMEFSLTDPRLEPHKWEKYCVLEIGDMLLRTAIGQVSRPMFLYVRTNGTSKIKMKWGMEMRRCLLQSLQQIESMIEAESSVKEKDMTKEFFENKSETWPIGESPKGVEEGSIGKVCRTLLAKSVFNSLYASPQLEGFSAESRKLLLIVQALRDNLEPGTFDLGGLYEAIEECLINDPWVLLNASWFNSFLTHALK</sequence>
<protein>
    <recommendedName>
        <fullName evidence="1">Polymerase acidic protein</fullName>
        <ecNumber evidence="1">3.1.-.-</ecNumber>
    </recommendedName>
    <alternativeName>
        <fullName evidence="1">RNA-directed RNA polymerase subunit P2</fullName>
    </alternativeName>
</protein>
<accession>Q6DNV6</accession>
<evidence type="ECO:0000255" key="1">
    <source>
        <dbReference type="HAMAP-Rule" id="MF_04063"/>
    </source>
</evidence>
<dbReference type="EC" id="3.1.-.-" evidence="1"/>
<dbReference type="EMBL" id="AY651646">
    <property type="protein sequence ID" value="AAT74522.2"/>
    <property type="molecule type" value="Genomic_RNA"/>
</dbReference>
<dbReference type="SMR" id="Q6DNV6"/>
<dbReference type="GO" id="GO:0030430">
    <property type="term" value="C:host cell cytoplasm"/>
    <property type="evidence" value="ECO:0007669"/>
    <property type="project" value="UniProtKB-SubCell"/>
</dbReference>
<dbReference type="GO" id="GO:0042025">
    <property type="term" value="C:host cell nucleus"/>
    <property type="evidence" value="ECO:0007669"/>
    <property type="project" value="UniProtKB-SubCell"/>
</dbReference>
<dbReference type="GO" id="GO:0004519">
    <property type="term" value="F:endonuclease activity"/>
    <property type="evidence" value="ECO:0007669"/>
    <property type="project" value="UniProtKB-KW"/>
</dbReference>
<dbReference type="GO" id="GO:0046872">
    <property type="term" value="F:metal ion binding"/>
    <property type="evidence" value="ECO:0007669"/>
    <property type="project" value="UniProtKB-KW"/>
</dbReference>
<dbReference type="GO" id="GO:0003723">
    <property type="term" value="F:RNA binding"/>
    <property type="evidence" value="ECO:0007669"/>
    <property type="project" value="InterPro"/>
</dbReference>
<dbReference type="GO" id="GO:0075526">
    <property type="term" value="P:cap snatching"/>
    <property type="evidence" value="ECO:0007669"/>
    <property type="project" value="UniProtKB-KW"/>
</dbReference>
<dbReference type="GO" id="GO:0039657">
    <property type="term" value="P:symbiont-mediated suppression of host gene expression"/>
    <property type="evidence" value="ECO:0007669"/>
    <property type="project" value="UniProtKB-KW"/>
</dbReference>
<dbReference type="GO" id="GO:0039523">
    <property type="term" value="P:symbiont-mediated suppression of host mRNA transcription via inhibition of RNA polymerase II activity"/>
    <property type="evidence" value="ECO:0007669"/>
    <property type="project" value="UniProtKB-KW"/>
</dbReference>
<dbReference type="GO" id="GO:0039694">
    <property type="term" value="P:viral RNA genome replication"/>
    <property type="evidence" value="ECO:0007669"/>
    <property type="project" value="InterPro"/>
</dbReference>
<dbReference type="GO" id="GO:0075523">
    <property type="term" value="P:viral translational frameshifting"/>
    <property type="evidence" value="ECO:0007669"/>
    <property type="project" value="UniProtKB-KW"/>
</dbReference>
<dbReference type="FunFam" id="3.40.91.90:FF:000001">
    <property type="entry name" value="Polymerase acidic protein"/>
    <property type="match status" value="1"/>
</dbReference>
<dbReference type="Gene3D" id="3.40.91.90">
    <property type="entry name" value="Influenza RNA-dependent RNA polymerase subunit PA, endonuclease domain"/>
    <property type="match status" value="1"/>
</dbReference>
<dbReference type="HAMAP" id="MF_04063">
    <property type="entry name" value="INFV_PA"/>
    <property type="match status" value="1"/>
</dbReference>
<dbReference type="InterPro" id="IPR037534">
    <property type="entry name" value="INFV_PA"/>
</dbReference>
<dbReference type="InterPro" id="IPR001009">
    <property type="entry name" value="PA/PA-X"/>
</dbReference>
<dbReference type="InterPro" id="IPR038372">
    <property type="entry name" value="PA/PA-X_sf"/>
</dbReference>
<dbReference type="Pfam" id="PF00603">
    <property type="entry name" value="Flu_PA"/>
    <property type="match status" value="1"/>
</dbReference>
<organism>
    <name type="scientific">Influenza A virus (strain A/Chicken/Shantou/4231/2003 H5N1 genotype V)</name>
    <dbReference type="NCBI Taxonomy" id="284184"/>
    <lineage>
        <taxon>Viruses</taxon>
        <taxon>Riboviria</taxon>
        <taxon>Orthornavirae</taxon>
        <taxon>Negarnaviricota</taxon>
        <taxon>Polyploviricotina</taxon>
        <taxon>Insthoviricetes</taxon>
        <taxon>Articulavirales</taxon>
        <taxon>Orthomyxoviridae</taxon>
        <taxon>Alphainfluenzavirus</taxon>
        <taxon>Alphainfluenzavirus influenzae</taxon>
        <taxon>Influenza A virus</taxon>
    </lineage>
</organism>
<organismHost>
    <name type="scientific">Aves</name>
    <dbReference type="NCBI Taxonomy" id="8782"/>
</organismHost>
<organismHost>
    <name type="scientific">Felis catus</name>
    <name type="common">Cat</name>
    <name type="synonym">Felis silvestris catus</name>
    <dbReference type="NCBI Taxonomy" id="9685"/>
</organismHost>
<organismHost>
    <name type="scientific">Homo sapiens</name>
    <name type="common">Human</name>
    <dbReference type="NCBI Taxonomy" id="9606"/>
</organismHost>
<organismHost>
    <name type="scientific">Panthera pardus</name>
    <name type="common">Leopard</name>
    <name type="synonym">Felis pardus</name>
    <dbReference type="NCBI Taxonomy" id="9691"/>
</organismHost>
<organismHost>
    <name type="scientific">Panthera tigris</name>
    <name type="common">Tiger</name>
    <dbReference type="NCBI Taxonomy" id="9694"/>
</organismHost>
<organismHost>
    <name type="scientific">Sus scrofa</name>
    <name type="common">Pig</name>
    <dbReference type="NCBI Taxonomy" id="9823"/>
</organismHost>
<gene>
    <name evidence="1" type="primary">PA</name>
</gene>
<feature type="chain" id="PRO_0000311141" description="Polymerase acidic protein">
    <location>
        <begin position="1" status="less than"/>
        <end position="709"/>
    </location>
</feature>
<feature type="short sequence motif" description="Nuclear localization signal 1 (NLS1)" evidence="1">
    <location>
        <begin position="117"/>
        <end position="132"/>
    </location>
</feature>
<feature type="short sequence motif" description="Nuclear localization signal 2 (NLS2)" evidence="1">
    <location>
        <begin position="177"/>
        <end position="240"/>
    </location>
</feature>
<feature type="binding site" evidence="1">
    <location>
        <position position="34"/>
    </location>
    <ligand>
        <name>Mn(2+)</name>
        <dbReference type="ChEBI" id="CHEBI:29035"/>
        <label>1</label>
    </ligand>
</feature>
<feature type="binding site" evidence="1">
    <location>
        <position position="73"/>
    </location>
    <ligand>
        <name>Mn(2+)</name>
        <dbReference type="ChEBI" id="CHEBI:29035"/>
        <label>2</label>
    </ligand>
</feature>
<feature type="binding site" evidence="1">
    <location>
        <position position="101"/>
    </location>
    <ligand>
        <name>Mn(2+)</name>
        <dbReference type="ChEBI" id="CHEBI:29035"/>
        <label>1</label>
    </ligand>
</feature>
<feature type="binding site" evidence="1">
    <location>
        <position position="101"/>
    </location>
    <ligand>
        <name>Mn(2+)</name>
        <dbReference type="ChEBI" id="CHEBI:29035"/>
        <label>2</label>
    </ligand>
</feature>
<feature type="binding site" evidence="1">
    <location>
        <position position="112"/>
    </location>
    <ligand>
        <name>Mn(2+)</name>
        <dbReference type="ChEBI" id="CHEBI:29035"/>
        <label>1</label>
    </ligand>
</feature>
<feature type="binding site" evidence="1">
    <location>
        <position position="113"/>
    </location>
    <ligand>
        <name>Mn(2+)</name>
        <dbReference type="ChEBI" id="CHEBI:29035"/>
        <label>1</label>
    </ligand>
</feature>
<feature type="non-terminal residue">
    <location>
        <position position="1"/>
    </location>
</feature>
<keyword id="KW-1157">Cap snatching</keyword>
<keyword id="KW-0255">Endonuclease</keyword>
<keyword id="KW-1262">Eukaryotic host gene expression shutoff by virus</keyword>
<keyword id="KW-1191">Eukaryotic host transcription shutoff by virus</keyword>
<keyword id="KW-1035">Host cytoplasm</keyword>
<keyword id="KW-1190">Host gene expression shutoff by virus</keyword>
<keyword id="KW-1048">Host nucleus</keyword>
<keyword id="KW-0945">Host-virus interaction</keyword>
<keyword id="KW-0378">Hydrolase</keyword>
<keyword id="KW-1104">Inhibition of host RNA polymerase II by virus</keyword>
<keyword id="KW-0464">Manganese</keyword>
<keyword id="KW-0479">Metal-binding</keyword>
<keyword id="KW-0540">Nuclease</keyword>
<keyword id="KW-0597">Phosphoprotein</keyword>
<keyword id="KW-0688">Ribosomal frameshifting</keyword>
<name>PA_I03A1</name>
<comment type="function">
    <text evidence="1">Plays an essential role in viral RNA transcription and replication by forming the heterotrimeric polymerase complex together with PB1 and PB2 subunits. The complex transcribes viral mRNAs by using a unique mechanism called cap-snatching. It consists in the hijacking and cleavage of host capped pre-mRNAs. These short capped RNAs are then used as primers for viral mRNAs. The PB2 subunit is responsible for the binding of the 5' cap of cellular pre-mRNAs which are subsequently cleaved after 10-13 nucleotides by the PA subunit that carries the endonuclease activity.</text>
</comment>
<comment type="cofactor">
    <cofactor evidence="1">
        <name>Mn(2+)</name>
        <dbReference type="ChEBI" id="CHEBI:29035"/>
    </cofactor>
    <text evidence="1">Binds 2 manganese ions per subunit.</text>
</comment>
<comment type="subunit">
    <text evidence="1">Influenza RNA polymerase is composed of three subunits: PB1, PB2 and PA. Interacts (via C-terminus) with PB1 (via N-terminus).</text>
</comment>
<comment type="subcellular location">
    <subcellularLocation>
        <location evidence="1">Host cytoplasm</location>
    </subcellularLocation>
    <subcellularLocation>
        <location evidence="1">Host nucleus</location>
    </subcellularLocation>
    <text evidence="1">PB1 and PA are transported in the host nucleus as a complex.</text>
</comment>
<comment type="alternative products">
    <event type="ribosomal frameshifting"/>
    <isoform>
        <id>Q6DNV6-1</id>
        <name>PA</name>
        <sequence type="displayed"/>
    </isoform>
    <isoform>
        <id>Q6DNV6-2</id>
        <name>PA-X</name>
        <sequence type="not described"/>
    </isoform>
</comment>
<comment type="PTM">
    <text evidence="1">Phosphorylated on serines and threonines by host kinases, including human casein kinase II.</text>
</comment>
<comment type="similarity">
    <text evidence="1">Belongs to the influenza viruses PA family.</text>
</comment>